<gene>
    <name type="primary">PET494</name>
    <name type="ordered locus">YNR045W</name>
    <name type="ORF">N3436</name>
</gene>
<name>PT494_YEAST</name>
<proteinExistence type="evidence at protein level"/>
<organism>
    <name type="scientific">Saccharomyces cerevisiae (strain ATCC 204508 / S288c)</name>
    <name type="common">Baker's yeast</name>
    <dbReference type="NCBI Taxonomy" id="559292"/>
    <lineage>
        <taxon>Eukaryota</taxon>
        <taxon>Fungi</taxon>
        <taxon>Dikarya</taxon>
        <taxon>Ascomycota</taxon>
        <taxon>Saccharomycotina</taxon>
        <taxon>Saccharomycetes</taxon>
        <taxon>Saccharomycetales</taxon>
        <taxon>Saccharomycetaceae</taxon>
        <taxon>Saccharomyces</taxon>
    </lineage>
</organism>
<protein>
    <recommendedName>
        <fullName>COX3 mRNA-specific translational activator PET494</fullName>
    </recommendedName>
</protein>
<comment type="function">
    <text>Required for the expression of the mitochondrial gene for cytochrome c oxidase subunit III (COX3).</text>
</comment>
<comment type="subcellular location">
    <subcellularLocation>
        <location evidence="2">Mitochondrion inner membrane</location>
        <topology evidence="2">Peripheral membrane protein</topology>
    </subcellularLocation>
</comment>
<comment type="miscellaneous">
    <text evidence="1">Present with 450 molecules/cell in log phase SD medium.</text>
</comment>
<evidence type="ECO:0000269" key="1">
    <source>
    </source>
</evidence>
<evidence type="ECO:0000269" key="2">
    <source>
    </source>
</evidence>
<evidence type="ECO:0000305" key="3"/>
<keyword id="KW-0010">Activator</keyword>
<keyword id="KW-0472">Membrane</keyword>
<keyword id="KW-0496">Mitochondrion</keyword>
<keyword id="KW-0999">Mitochondrion inner membrane</keyword>
<keyword id="KW-1185">Reference proteome</keyword>
<keyword id="KW-0810">Translation regulation</keyword>
<reference key="1">
    <citation type="journal article" date="1986" name="Mol. Gen. Genet.">
        <title>Primary structure of wild-type and mutant alleles of the PET494 gene of Saccharomyces cerevisiae.</title>
        <authorList>
            <person name="Costanzo M.C."/>
            <person name="Mueller P.P."/>
            <person name="Strick C.A."/>
            <person name="Fox T.D."/>
        </authorList>
    </citation>
    <scope>NUCLEOTIDE SEQUENCE [GENOMIC DNA]</scope>
</reference>
<reference key="2">
    <citation type="journal article" date="1997" name="Nature">
        <title>The nucleotide sequence of Saccharomyces cerevisiae chromosome XIV and its evolutionary implications.</title>
        <authorList>
            <person name="Philippsen P."/>
            <person name="Kleine K."/>
            <person name="Poehlmann R."/>
            <person name="Duesterhoeft A."/>
            <person name="Hamberg K."/>
            <person name="Hegemann J.H."/>
            <person name="Obermaier B."/>
            <person name="Urrestarazu L.A."/>
            <person name="Aert R."/>
            <person name="Albermann K."/>
            <person name="Altmann R."/>
            <person name="Andre B."/>
            <person name="Baladron V."/>
            <person name="Ballesta J.P.G."/>
            <person name="Becam A.-M."/>
            <person name="Beinhauer J.D."/>
            <person name="Boskovic J."/>
            <person name="Buitrago M.J."/>
            <person name="Bussereau F."/>
            <person name="Coster F."/>
            <person name="Crouzet M."/>
            <person name="D'Angelo M."/>
            <person name="Dal Pero F."/>
            <person name="De Antoni A."/>
            <person name="del Rey F."/>
            <person name="Doignon F."/>
            <person name="Domdey H."/>
            <person name="Dubois E."/>
            <person name="Fiedler T.A."/>
            <person name="Fleig U."/>
            <person name="Floeth M."/>
            <person name="Fritz C."/>
            <person name="Gaillardin C."/>
            <person name="Garcia-Cantalejo J.M."/>
            <person name="Glansdorff N."/>
            <person name="Goffeau A."/>
            <person name="Gueldener U."/>
            <person name="Herbert C.J."/>
            <person name="Heumann K."/>
            <person name="Heuss-Neitzel D."/>
            <person name="Hilbert H."/>
            <person name="Hinni K."/>
            <person name="Iraqui Houssaini I."/>
            <person name="Jacquet M."/>
            <person name="Jimenez A."/>
            <person name="Jonniaux J.-L."/>
            <person name="Karpfinger-Hartl L."/>
            <person name="Lanfranchi G."/>
            <person name="Lepingle A."/>
            <person name="Levesque H."/>
            <person name="Lyck R."/>
            <person name="Maftahi M."/>
            <person name="Mallet L."/>
            <person name="Maurer C.T.C."/>
            <person name="Messenguy F."/>
            <person name="Mewes H.-W."/>
            <person name="Moestl D."/>
            <person name="Nasr F."/>
            <person name="Nicaud J.-M."/>
            <person name="Niedenthal R.K."/>
            <person name="Pandolfo D."/>
            <person name="Pierard A."/>
            <person name="Piravandi E."/>
            <person name="Planta R.J."/>
            <person name="Pohl T.M."/>
            <person name="Purnelle B."/>
            <person name="Rebischung C."/>
            <person name="Remacha M.A."/>
            <person name="Revuelta J.L."/>
            <person name="Rinke M."/>
            <person name="Saiz J.E."/>
            <person name="Sartorello F."/>
            <person name="Scherens B."/>
            <person name="Sen-Gupta M."/>
            <person name="Soler-Mira A."/>
            <person name="Urbanus J.H.M."/>
            <person name="Valle G."/>
            <person name="Van Dyck L."/>
            <person name="Verhasselt P."/>
            <person name="Vierendeels F."/>
            <person name="Vissers S."/>
            <person name="Voet M."/>
            <person name="Volckaert G."/>
            <person name="Wach A."/>
            <person name="Wambutt R."/>
            <person name="Wedler H."/>
            <person name="Zollner A."/>
            <person name="Hani J."/>
        </authorList>
    </citation>
    <scope>NUCLEOTIDE SEQUENCE [LARGE SCALE GENOMIC DNA]</scope>
    <source>
        <strain>ATCC 204508 / S288c</strain>
    </source>
</reference>
<reference key="3">
    <citation type="journal article" date="2014" name="G3 (Bethesda)">
        <title>The reference genome sequence of Saccharomyces cerevisiae: Then and now.</title>
        <authorList>
            <person name="Engel S.R."/>
            <person name="Dietrich F.S."/>
            <person name="Fisk D.G."/>
            <person name="Binkley G."/>
            <person name="Balakrishnan R."/>
            <person name="Costanzo M.C."/>
            <person name="Dwight S.S."/>
            <person name="Hitz B.C."/>
            <person name="Karra K."/>
            <person name="Nash R.S."/>
            <person name="Weng S."/>
            <person name="Wong E.D."/>
            <person name="Lloyd P."/>
            <person name="Skrzypek M.S."/>
            <person name="Miyasato S.R."/>
            <person name="Simison M."/>
            <person name="Cherry J.M."/>
        </authorList>
    </citation>
    <scope>GENOME REANNOTATION</scope>
    <source>
        <strain>ATCC 204508 / S288c</strain>
    </source>
</reference>
<reference key="4">
    <citation type="journal article" date="1993" name="J. Biol. Chem.">
        <title>COX3 mRNA-specific translational activator proteins are associated with the inner mitochondrial membrane in Saccharomyces cerevisiae.</title>
        <authorList>
            <person name="McMullin T.W."/>
            <person name="Fox T.D."/>
        </authorList>
    </citation>
    <scope>SUBCELLULAR LOCATION</scope>
</reference>
<reference key="5">
    <citation type="journal article" date="2003" name="Nature">
        <title>Global analysis of protein expression in yeast.</title>
        <authorList>
            <person name="Ghaemmaghami S."/>
            <person name="Huh W.-K."/>
            <person name="Bower K."/>
            <person name="Howson R.W."/>
            <person name="Belle A."/>
            <person name="Dephoure N."/>
            <person name="O'Shea E.K."/>
            <person name="Weissman J.S."/>
        </authorList>
    </citation>
    <scope>LEVEL OF PROTEIN EXPRESSION [LARGE SCALE ANALYSIS]</scope>
</reference>
<sequence>MHLKKGKRSISTVWRLLWKRFYSVNSKTNMHFSRSRKKPVTNFTRTNGLLLSCNGDTFPYLRTLWRYFNAPGNLMFVTTNIVAFMGIVTYNTLVTISSERAFEEQMMAAQVSLAKQREELETTALSLPRDIELRGEEDDIKWEQPDVAHVREDPLVEEQNAKLDTPIKQYTLGDLILNKRENVTDYDSQRAKASIFHMLYAYMLYRDVIQPTTMTQNNNSEEWRREVELLTKGKEVQGTHRRIDVFYDLWNKNFDKIVTSPEKVQNFQLPNWSKYPTILKFICTELHDNSLKTLGEFKQFYGKVRSNEVKKLLGLWLYDHSFLFPHNIYDNRTEEDFYDILINDSMQDNRIFQKYSSIVMNPYNERTQLFFPNVNSPSVNKPVPSISLETYTRLLKGYINLQETGCKYDYNDNIFKLISILKLNCFLQRNKKKHAGPTVRILLPRDEDRSQILGTISQAEKRTCYQILSKNRDVVALLKRISDIQADSS</sequence>
<accession>P07390</accession>
<accession>D6W1M0</accession>
<dbReference type="EMBL" id="K03520">
    <property type="protein sequence ID" value="AAA34857.1"/>
    <property type="molecule type" value="Genomic_DNA"/>
</dbReference>
<dbReference type="EMBL" id="Z71660">
    <property type="protein sequence ID" value="CAA96326.1"/>
    <property type="molecule type" value="Genomic_DNA"/>
</dbReference>
<dbReference type="EMBL" id="BK006947">
    <property type="protein sequence ID" value="DAA10586.1"/>
    <property type="molecule type" value="Genomic_DNA"/>
</dbReference>
<dbReference type="PIR" id="S63376">
    <property type="entry name" value="RGBYP4"/>
</dbReference>
<dbReference type="RefSeq" id="NP_014443.3">
    <property type="nucleotide sequence ID" value="NM_001183222.3"/>
</dbReference>
<dbReference type="BioGRID" id="35870">
    <property type="interactions" value="179"/>
</dbReference>
<dbReference type="DIP" id="DIP-7463N"/>
<dbReference type="FunCoup" id="P07390">
    <property type="interactions" value="168"/>
</dbReference>
<dbReference type="IntAct" id="P07390">
    <property type="interactions" value="10"/>
</dbReference>
<dbReference type="STRING" id="4932.YNR045W"/>
<dbReference type="PaxDb" id="4932-YNR045W"/>
<dbReference type="PeptideAtlas" id="P07390"/>
<dbReference type="EnsemblFungi" id="YNR045W_mRNA">
    <property type="protein sequence ID" value="YNR045W"/>
    <property type="gene ID" value="YNR045W"/>
</dbReference>
<dbReference type="GeneID" id="855781"/>
<dbReference type="KEGG" id="sce:YNR045W"/>
<dbReference type="AGR" id="SGD:S000005328"/>
<dbReference type="SGD" id="S000005328">
    <property type="gene designation" value="PET494"/>
</dbReference>
<dbReference type="VEuPathDB" id="FungiDB:YNR045W"/>
<dbReference type="eggNOG" id="ENOG502S01Z">
    <property type="taxonomic scope" value="Eukaryota"/>
</dbReference>
<dbReference type="HOGENOM" id="CLU_042193_0_0_1"/>
<dbReference type="InParanoid" id="P07390"/>
<dbReference type="OMA" id="ILINDSM"/>
<dbReference type="OrthoDB" id="4057244at2759"/>
<dbReference type="BioCyc" id="YEAST:G3O-33352-MONOMER"/>
<dbReference type="BioGRID-ORCS" id="855781">
    <property type="hits" value="10 hits in 10 CRISPR screens"/>
</dbReference>
<dbReference type="PRO" id="PR:P07390"/>
<dbReference type="Proteomes" id="UP000002311">
    <property type="component" value="Chromosome XIV"/>
</dbReference>
<dbReference type="RNAct" id="P07390">
    <property type="molecule type" value="protein"/>
</dbReference>
<dbReference type="GO" id="GO:0005743">
    <property type="term" value="C:mitochondrial inner membrane"/>
    <property type="evidence" value="ECO:0000314"/>
    <property type="project" value="SGD"/>
</dbReference>
<dbReference type="GO" id="GO:0005739">
    <property type="term" value="C:mitochondrion"/>
    <property type="evidence" value="ECO:0007005"/>
    <property type="project" value="SGD"/>
</dbReference>
<dbReference type="GO" id="GO:0045182">
    <property type="term" value="F:translation regulator activity"/>
    <property type="evidence" value="ECO:0000315"/>
    <property type="project" value="SGD"/>
</dbReference>
<dbReference type="GO" id="GO:0070131">
    <property type="term" value="P:positive regulation of mitochondrial translation"/>
    <property type="evidence" value="ECO:0000315"/>
    <property type="project" value="SGD"/>
</dbReference>
<feature type="chain" id="PRO_0000097085" description="COX3 mRNA-specific translational activator PET494">
    <location>
        <begin position="1"/>
        <end position="489"/>
    </location>
</feature>
<feature type="sequence conflict" description="In Ref. 1; AAA34857." evidence="3" ref="1">
    <original>F</original>
    <variation>S</variation>
    <location>
        <position position="68"/>
    </location>
</feature>